<proteinExistence type="evidence at transcript level"/>
<protein>
    <recommendedName>
        <fullName>Cellular tumor antigen p53</fullName>
    </recommendedName>
    <alternativeName>
        <fullName>Tumor suppressor p53</fullName>
    </alternativeName>
</protein>
<dbReference type="EMBL" id="M75145">
    <property type="protein sequence ID" value="AAA49605.1"/>
    <property type="molecule type" value="mRNA"/>
</dbReference>
<dbReference type="PIR" id="JH0631">
    <property type="entry name" value="JH0631"/>
</dbReference>
<dbReference type="RefSeq" id="NP_001118164.1">
    <property type="nucleotide sequence ID" value="NM_001124692.1"/>
</dbReference>
<dbReference type="SMR" id="P25035"/>
<dbReference type="GeneID" id="100136737"/>
<dbReference type="KEGG" id="omy:100136737"/>
<dbReference type="CTD" id="7157"/>
<dbReference type="OrthoDB" id="5915660at2759"/>
<dbReference type="Proteomes" id="UP000694395">
    <property type="component" value="Unplaced"/>
</dbReference>
<dbReference type="GO" id="GO:0005737">
    <property type="term" value="C:cytoplasm"/>
    <property type="evidence" value="ECO:0000250"/>
    <property type="project" value="UniProtKB"/>
</dbReference>
<dbReference type="GO" id="GO:0005739">
    <property type="term" value="C:mitochondrion"/>
    <property type="evidence" value="ECO:0000250"/>
    <property type="project" value="UniProtKB"/>
</dbReference>
<dbReference type="GO" id="GO:0005634">
    <property type="term" value="C:nucleus"/>
    <property type="evidence" value="ECO:0000250"/>
    <property type="project" value="UniProtKB"/>
</dbReference>
<dbReference type="GO" id="GO:0000981">
    <property type="term" value="F:DNA-binding transcription factor activity, RNA polymerase II-specific"/>
    <property type="evidence" value="ECO:0007669"/>
    <property type="project" value="TreeGrafter"/>
</dbReference>
<dbReference type="GO" id="GO:0046872">
    <property type="term" value="F:metal ion binding"/>
    <property type="evidence" value="ECO:0007669"/>
    <property type="project" value="UniProtKB-KW"/>
</dbReference>
<dbReference type="GO" id="GO:0140693">
    <property type="term" value="F:molecular condensate scaffold activity"/>
    <property type="evidence" value="ECO:0000250"/>
    <property type="project" value="UniProtKB"/>
</dbReference>
<dbReference type="GO" id="GO:1990841">
    <property type="term" value="F:promoter-specific chromatin binding"/>
    <property type="evidence" value="ECO:0000250"/>
    <property type="project" value="UniProtKB"/>
</dbReference>
<dbReference type="GO" id="GO:0000978">
    <property type="term" value="F:RNA polymerase II cis-regulatory region sequence-specific DNA binding"/>
    <property type="evidence" value="ECO:0007669"/>
    <property type="project" value="TreeGrafter"/>
</dbReference>
<dbReference type="GO" id="GO:0006915">
    <property type="term" value="P:apoptotic process"/>
    <property type="evidence" value="ECO:0007669"/>
    <property type="project" value="UniProtKB-KW"/>
</dbReference>
<dbReference type="GO" id="GO:0006974">
    <property type="term" value="P:DNA damage response"/>
    <property type="evidence" value="ECO:0000250"/>
    <property type="project" value="UniProtKB"/>
</dbReference>
<dbReference type="GO" id="GO:0043066">
    <property type="term" value="P:negative regulation of apoptotic process"/>
    <property type="evidence" value="ECO:0000315"/>
    <property type="project" value="AgBase"/>
</dbReference>
<dbReference type="GO" id="GO:0045944">
    <property type="term" value="P:positive regulation of transcription by RNA polymerase II"/>
    <property type="evidence" value="ECO:0000250"/>
    <property type="project" value="UniProtKB"/>
</dbReference>
<dbReference type="GO" id="GO:0051262">
    <property type="term" value="P:protein tetramerization"/>
    <property type="evidence" value="ECO:0007669"/>
    <property type="project" value="InterPro"/>
</dbReference>
<dbReference type="CDD" id="cd08367">
    <property type="entry name" value="P53"/>
    <property type="match status" value="1"/>
</dbReference>
<dbReference type="FunFam" id="2.60.40.720:FF:000003">
    <property type="entry name" value="Cellular tumor antigen p53"/>
    <property type="match status" value="1"/>
</dbReference>
<dbReference type="FunFam" id="4.10.170.10:FF:000005">
    <property type="entry name" value="Cellular tumor antigen p53"/>
    <property type="match status" value="1"/>
</dbReference>
<dbReference type="Gene3D" id="2.60.40.720">
    <property type="match status" value="1"/>
</dbReference>
<dbReference type="Gene3D" id="4.10.170.10">
    <property type="entry name" value="p53-like tetramerisation domain"/>
    <property type="match status" value="1"/>
</dbReference>
<dbReference type="InterPro" id="IPR008967">
    <property type="entry name" value="p53-like_TF_DNA-bd_sf"/>
</dbReference>
<dbReference type="InterPro" id="IPR012346">
    <property type="entry name" value="p53/RUNT-type_TF_DNA-bd_sf"/>
</dbReference>
<dbReference type="InterPro" id="IPR011615">
    <property type="entry name" value="p53_DNA-bd"/>
</dbReference>
<dbReference type="InterPro" id="IPR036674">
    <property type="entry name" value="p53_tetramer_sf"/>
</dbReference>
<dbReference type="InterPro" id="IPR010991">
    <property type="entry name" value="p53_tetrameristn"/>
</dbReference>
<dbReference type="InterPro" id="IPR013872">
    <property type="entry name" value="p53_transactivation_domain"/>
</dbReference>
<dbReference type="InterPro" id="IPR002117">
    <property type="entry name" value="p53_tumour_suppressor"/>
</dbReference>
<dbReference type="PANTHER" id="PTHR11447">
    <property type="entry name" value="CELLULAR TUMOR ANTIGEN P53"/>
    <property type="match status" value="1"/>
</dbReference>
<dbReference type="PANTHER" id="PTHR11447:SF6">
    <property type="entry name" value="CELLULAR TUMOR ANTIGEN P53"/>
    <property type="match status" value="1"/>
</dbReference>
<dbReference type="Pfam" id="PF00870">
    <property type="entry name" value="P53"/>
    <property type="match status" value="1"/>
</dbReference>
<dbReference type="Pfam" id="PF08563">
    <property type="entry name" value="P53_TAD"/>
    <property type="match status" value="1"/>
</dbReference>
<dbReference type="Pfam" id="PF07710">
    <property type="entry name" value="P53_tetramer"/>
    <property type="match status" value="1"/>
</dbReference>
<dbReference type="PRINTS" id="PR00386">
    <property type="entry name" value="P53SUPPRESSR"/>
</dbReference>
<dbReference type="SUPFAM" id="SSF47719">
    <property type="entry name" value="p53 tetramerization domain"/>
    <property type="match status" value="1"/>
</dbReference>
<dbReference type="SUPFAM" id="SSF49417">
    <property type="entry name" value="p53-like transcription factors"/>
    <property type="match status" value="1"/>
</dbReference>
<dbReference type="PROSITE" id="PS00348">
    <property type="entry name" value="P53"/>
    <property type="match status" value="1"/>
</dbReference>
<organism>
    <name type="scientific">Oncorhynchus mykiss</name>
    <name type="common">Rainbow trout</name>
    <name type="synonym">Salmo gairdneri</name>
    <dbReference type="NCBI Taxonomy" id="8022"/>
    <lineage>
        <taxon>Eukaryota</taxon>
        <taxon>Metazoa</taxon>
        <taxon>Chordata</taxon>
        <taxon>Craniata</taxon>
        <taxon>Vertebrata</taxon>
        <taxon>Euteleostomi</taxon>
        <taxon>Actinopterygii</taxon>
        <taxon>Neopterygii</taxon>
        <taxon>Teleostei</taxon>
        <taxon>Protacanthopterygii</taxon>
        <taxon>Salmoniformes</taxon>
        <taxon>Salmonidae</taxon>
        <taxon>Salmoninae</taxon>
        <taxon>Oncorhynchus</taxon>
    </lineage>
</organism>
<keyword id="KW-0010">Activator</keyword>
<keyword id="KW-0053">Apoptosis</keyword>
<keyword id="KW-0131">Cell cycle</keyword>
<keyword id="KW-0963">Cytoplasm</keyword>
<keyword id="KW-0238">DNA-binding</keyword>
<keyword id="KW-0479">Metal-binding</keyword>
<keyword id="KW-0539">Nucleus</keyword>
<keyword id="KW-0597">Phosphoprotein</keyword>
<keyword id="KW-0804">Transcription</keyword>
<keyword id="KW-0805">Transcription regulation</keyword>
<keyword id="KW-0043">Tumor suppressor</keyword>
<keyword id="KW-0862">Zinc</keyword>
<reference key="1">
    <citation type="journal article" date="1992" name="Gene">
        <title>Rainbow trout p53: cDNA cloning and biochemical characterization.</title>
        <authorList>
            <person name="de Fromentel C.C."/>
            <person name="Padkel F."/>
            <person name="Chapus A."/>
            <person name="Baney C."/>
            <person name="May P."/>
            <person name="Soussi T."/>
        </authorList>
    </citation>
    <scope>NUCLEOTIDE SEQUENCE [MRNA]</scope>
</reference>
<name>P53_ONCMY</name>
<feature type="chain" id="PRO_0000185720" description="Cellular tumor antigen p53">
    <location>
        <begin position="1"/>
        <end position="396"/>
    </location>
</feature>
<feature type="DNA-binding region" evidence="1">
    <location>
        <begin position="90"/>
        <end position="281"/>
    </location>
</feature>
<feature type="region of interest" description="Transcription activation (acidic)">
    <location>
        <begin position="1"/>
        <end position="44"/>
    </location>
</feature>
<feature type="region of interest" description="Disordered" evidence="3">
    <location>
        <begin position="63"/>
        <end position="89"/>
    </location>
</feature>
<feature type="region of interest" description="Interaction with DNA" evidence="1">
    <location>
        <begin position="262"/>
        <end position="269"/>
    </location>
</feature>
<feature type="region of interest" description="Disordered" evidence="3">
    <location>
        <begin position="301"/>
        <end position="322"/>
    </location>
</feature>
<feature type="region of interest" description="Oligomerization">
    <location>
        <begin position="325"/>
        <end position="356"/>
    </location>
</feature>
<feature type="region of interest" description="Basic (repression of DNA-binding)">
    <location>
        <begin position="369"/>
        <end position="392"/>
    </location>
</feature>
<feature type="short sequence motif" description="Bipartite nuclear localization signal" evidence="1">
    <location>
        <begin position="297"/>
        <end position="317"/>
    </location>
</feature>
<feature type="short sequence motif" description="Nuclear export signal" evidence="1">
    <location>
        <begin position="339"/>
        <end position="350"/>
    </location>
</feature>
<feature type="compositionally biased region" description="Low complexity" evidence="3">
    <location>
        <begin position="77"/>
        <end position="89"/>
    </location>
</feature>
<feature type="binding site" evidence="1">
    <location>
        <position position="164"/>
    </location>
    <ligand>
        <name>Zn(2+)</name>
        <dbReference type="ChEBI" id="CHEBI:29105"/>
    </ligand>
</feature>
<feature type="binding site" evidence="1">
    <location>
        <position position="167"/>
    </location>
    <ligand>
        <name>Zn(2+)</name>
        <dbReference type="ChEBI" id="CHEBI:29105"/>
    </ligand>
</feature>
<feature type="binding site" evidence="1">
    <location>
        <position position="227"/>
    </location>
    <ligand>
        <name>Zn(2+)</name>
        <dbReference type="ChEBI" id="CHEBI:29105"/>
    </ligand>
</feature>
<feature type="binding site" evidence="1">
    <location>
        <position position="231"/>
    </location>
    <ligand>
        <name>Zn(2+)</name>
        <dbReference type="ChEBI" id="CHEBI:29105"/>
    </ligand>
</feature>
<feature type="site" description="Interaction with DNA" evidence="1">
    <location>
        <position position="108"/>
    </location>
</feature>
<comment type="function">
    <text evidence="1">Multifunctional transcription factor that induces cell cycle arrest, DNA repair or apoptosis upon binding to its target DNA sequence. Acts as a tumor suppressor in many tumor types; induces growth arrest or apoptosis depending on the physiological circumstances and cell type. Negatively regulates cell division by controlling expression of a set of genes required for this process. One of the activated genes is an inhibitor of cyclin-dependent kinases. Apoptosis induction seems to be mediated either by stimulation of BAX and FAS antigen expression, or by repression of Bcl-2 expression (By similarity).</text>
</comment>
<comment type="cofactor">
    <cofactor evidence="1">
        <name>Zn(2+)</name>
        <dbReference type="ChEBI" id="CHEBI:29105"/>
    </cofactor>
    <text evidence="1">Binds 1 zinc ion per subunit.</text>
</comment>
<comment type="subunit">
    <text evidence="1">Binds DNA as a homotetramer.</text>
</comment>
<comment type="subcellular location">
    <subcellularLocation>
        <location evidence="1">Cytoplasm</location>
    </subcellularLocation>
    <subcellularLocation>
        <location evidence="1">Nucleus</location>
    </subcellularLocation>
</comment>
<comment type="domain">
    <text evidence="2">The N-terminal and C-terminal disordered regions undergo liquid-liquid phase separation (LLPS) following homotetramerization and activation. Post-translational modifications, such as phosphorylation or lactylation affect the ability to undergo LLPS.</text>
</comment>
<comment type="domain">
    <text evidence="2">The nuclear export signal acts as a transcriptional repression domain. The TADI and TADII motifs (residues 17 to 25 and 48 to 56) correspond both to 9aaTAD motifs which are transactivation domains present in a large number of yeast and animal transcription factors.</text>
</comment>
<comment type="similarity">
    <text evidence="4">Belongs to the p53 family.</text>
</comment>
<sequence>MADLAENVSLPLSQESFEDLWKMNLNLVAVQPPETESWVGYDNFMMEAPLQVEFDPSLFEVSATEPAPQPSISTLDTGSPPTSTVPTTSDYPGALGFQLRFLQSSTAKSVTCTYSPDLNKLFCQLAKTCPVQIVVDHPPPPGAVVRALAIYKKLSDVADVVRRCPHHQSTSENNEGPAPRGHLVRVEGNQRSEYMEDGNTLRHSVLVPYEPPQVGSECTTVLYNFMCNSSCMGGMNRRPILTIITLETQEGQLLGRRSFEVRVCACPGRDRKTEEINLKKQQETTLETKTKPAQGIKRAMKEASLPAPQPGASKKTKSSPAVSDDEIYTLQIRGKEKYEMLKKFNDSLELSELVPVADADKYRQKCLTKRVAKRDFGVGPKKRKKLLVKEEKSDSD</sequence>
<gene>
    <name type="primary">tp53</name>
    <name type="synonym">p53</name>
</gene>
<evidence type="ECO:0000250" key="1"/>
<evidence type="ECO:0000250" key="2">
    <source>
        <dbReference type="UniProtKB" id="P04637"/>
    </source>
</evidence>
<evidence type="ECO:0000256" key="3">
    <source>
        <dbReference type="SAM" id="MobiDB-lite"/>
    </source>
</evidence>
<evidence type="ECO:0000305" key="4"/>
<accession>P25035</accession>